<comment type="function">
    <text evidence="1">Catalyzes the cyclization of GTP to (8S)-3',8-cyclo-7,8-dihydroguanosine 5'-triphosphate.</text>
</comment>
<comment type="catalytic activity">
    <reaction evidence="1">
        <text>GTP + AH2 + S-adenosyl-L-methionine = (8S)-3',8-cyclo-7,8-dihydroguanosine 5'-triphosphate + 5'-deoxyadenosine + L-methionine + A + H(+)</text>
        <dbReference type="Rhea" id="RHEA:49576"/>
        <dbReference type="ChEBI" id="CHEBI:13193"/>
        <dbReference type="ChEBI" id="CHEBI:15378"/>
        <dbReference type="ChEBI" id="CHEBI:17319"/>
        <dbReference type="ChEBI" id="CHEBI:17499"/>
        <dbReference type="ChEBI" id="CHEBI:37565"/>
        <dbReference type="ChEBI" id="CHEBI:57844"/>
        <dbReference type="ChEBI" id="CHEBI:59789"/>
        <dbReference type="ChEBI" id="CHEBI:131766"/>
        <dbReference type="EC" id="4.1.99.22"/>
    </reaction>
</comment>
<comment type="cofactor">
    <cofactor evidence="1">
        <name>[4Fe-4S] cluster</name>
        <dbReference type="ChEBI" id="CHEBI:49883"/>
    </cofactor>
    <text evidence="1">Binds 2 [4Fe-4S] clusters. Binds 1 [4Fe-4S] cluster coordinated with 3 cysteines and an exchangeable S-adenosyl-L-methionine and 1 [4Fe-4S] cluster coordinated with 3 cysteines and the GTP-derived substrate.</text>
</comment>
<comment type="pathway">
    <text evidence="1">Cofactor biosynthesis; molybdopterin biosynthesis.</text>
</comment>
<comment type="subunit">
    <text evidence="1">Monomer and homodimer.</text>
</comment>
<comment type="similarity">
    <text evidence="1">Belongs to the radical SAM superfamily. MoaA family.</text>
</comment>
<keyword id="KW-0004">4Fe-4S</keyword>
<keyword id="KW-0342">GTP-binding</keyword>
<keyword id="KW-0408">Iron</keyword>
<keyword id="KW-0411">Iron-sulfur</keyword>
<keyword id="KW-0456">Lyase</keyword>
<keyword id="KW-0479">Metal-binding</keyword>
<keyword id="KW-0501">Molybdenum cofactor biosynthesis</keyword>
<keyword id="KW-0547">Nucleotide-binding</keyword>
<keyword id="KW-0949">S-adenosyl-L-methionine</keyword>
<organism>
    <name type="scientific">Escherichia fergusonii (strain ATCC 35469 / DSM 13698 / CCUG 18766 / IAM 14443 / JCM 21226 / LMG 7866 / NBRC 102419 / NCTC 12128 / CDC 0568-73)</name>
    <dbReference type="NCBI Taxonomy" id="585054"/>
    <lineage>
        <taxon>Bacteria</taxon>
        <taxon>Pseudomonadati</taxon>
        <taxon>Pseudomonadota</taxon>
        <taxon>Gammaproteobacteria</taxon>
        <taxon>Enterobacterales</taxon>
        <taxon>Enterobacteriaceae</taxon>
        <taxon>Escherichia</taxon>
    </lineage>
</organism>
<protein>
    <recommendedName>
        <fullName evidence="1">GTP 3',8-cyclase</fullName>
        <ecNumber evidence="1">4.1.99.22</ecNumber>
    </recommendedName>
    <alternativeName>
        <fullName evidence="1">Molybdenum cofactor biosynthesis protein A</fullName>
    </alternativeName>
</protein>
<feature type="chain" id="PRO_1000139326" description="GTP 3',8-cyclase">
    <location>
        <begin position="1"/>
        <end position="329"/>
    </location>
</feature>
<feature type="domain" description="Radical SAM core" evidence="2">
    <location>
        <begin position="8"/>
        <end position="234"/>
    </location>
</feature>
<feature type="binding site" evidence="1">
    <location>
        <position position="17"/>
    </location>
    <ligand>
        <name>GTP</name>
        <dbReference type="ChEBI" id="CHEBI:37565"/>
    </ligand>
</feature>
<feature type="binding site" evidence="1">
    <location>
        <position position="24"/>
    </location>
    <ligand>
        <name>[4Fe-4S] cluster</name>
        <dbReference type="ChEBI" id="CHEBI:49883"/>
        <label>1</label>
        <note>4Fe-4S-S-AdoMet</note>
    </ligand>
</feature>
<feature type="binding site" evidence="1">
    <location>
        <position position="28"/>
    </location>
    <ligand>
        <name>[4Fe-4S] cluster</name>
        <dbReference type="ChEBI" id="CHEBI:49883"/>
        <label>1</label>
        <note>4Fe-4S-S-AdoMet</note>
    </ligand>
</feature>
<feature type="binding site" evidence="1">
    <location>
        <position position="30"/>
    </location>
    <ligand>
        <name>S-adenosyl-L-methionine</name>
        <dbReference type="ChEBI" id="CHEBI:59789"/>
    </ligand>
</feature>
<feature type="binding site" evidence="1">
    <location>
        <position position="31"/>
    </location>
    <ligand>
        <name>[4Fe-4S] cluster</name>
        <dbReference type="ChEBI" id="CHEBI:49883"/>
        <label>1</label>
        <note>4Fe-4S-S-AdoMet</note>
    </ligand>
</feature>
<feature type="binding site" evidence="1">
    <location>
        <position position="68"/>
    </location>
    <ligand>
        <name>GTP</name>
        <dbReference type="ChEBI" id="CHEBI:37565"/>
    </ligand>
</feature>
<feature type="binding site" evidence="1">
    <location>
        <position position="72"/>
    </location>
    <ligand>
        <name>S-adenosyl-L-methionine</name>
        <dbReference type="ChEBI" id="CHEBI:59789"/>
    </ligand>
</feature>
<feature type="binding site" evidence="1">
    <location>
        <position position="99"/>
    </location>
    <ligand>
        <name>GTP</name>
        <dbReference type="ChEBI" id="CHEBI:37565"/>
    </ligand>
</feature>
<feature type="binding site" evidence="1">
    <location>
        <position position="123"/>
    </location>
    <ligand>
        <name>S-adenosyl-L-methionine</name>
        <dbReference type="ChEBI" id="CHEBI:59789"/>
    </ligand>
</feature>
<feature type="binding site" evidence="1">
    <location>
        <position position="160"/>
    </location>
    <ligand>
        <name>GTP</name>
        <dbReference type="ChEBI" id="CHEBI:37565"/>
    </ligand>
</feature>
<feature type="binding site" evidence="1">
    <location>
        <position position="194"/>
    </location>
    <ligand>
        <name>S-adenosyl-L-methionine</name>
        <dbReference type="ChEBI" id="CHEBI:59789"/>
    </ligand>
</feature>
<feature type="binding site" evidence="1">
    <location>
        <position position="257"/>
    </location>
    <ligand>
        <name>[4Fe-4S] cluster</name>
        <dbReference type="ChEBI" id="CHEBI:49883"/>
        <label>2</label>
        <note>4Fe-4S-substrate</note>
    </ligand>
</feature>
<feature type="binding site" evidence="1">
    <location>
        <position position="260"/>
    </location>
    <ligand>
        <name>[4Fe-4S] cluster</name>
        <dbReference type="ChEBI" id="CHEBI:49883"/>
        <label>2</label>
        <note>4Fe-4S-substrate</note>
    </ligand>
</feature>
<feature type="binding site" evidence="1">
    <location>
        <begin position="262"/>
        <end position="264"/>
    </location>
    <ligand>
        <name>GTP</name>
        <dbReference type="ChEBI" id="CHEBI:37565"/>
    </ligand>
</feature>
<feature type="binding site" evidence="1">
    <location>
        <position position="274"/>
    </location>
    <ligand>
        <name>[4Fe-4S] cluster</name>
        <dbReference type="ChEBI" id="CHEBI:49883"/>
        <label>2</label>
        <note>4Fe-4S-substrate</note>
    </ligand>
</feature>
<evidence type="ECO:0000255" key="1">
    <source>
        <dbReference type="HAMAP-Rule" id="MF_01225"/>
    </source>
</evidence>
<evidence type="ECO:0000255" key="2">
    <source>
        <dbReference type="PROSITE-ProRule" id="PRU01266"/>
    </source>
</evidence>
<dbReference type="EC" id="4.1.99.22" evidence="1"/>
<dbReference type="EMBL" id="CU928158">
    <property type="protein sequence ID" value="CAQ89831.1"/>
    <property type="molecule type" value="Genomic_DNA"/>
</dbReference>
<dbReference type="RefSeq" id="WP_002432387.1">
    <property type="nucleotide sequence ID" value="NC_011740.1"/>
</dbReference>
<dbReference type="SMR" id="B7LJY1"/>
<dbReference type="GeneID" id="75056639"/>
<dbReference type="KEGG" id="efe:EFER_2330"/>
<dbReference type="HOGENOM" id="CLU_009273_0_1_6"/>
<dbReference type="OrthoDB" id="9763993at2"/>
<dbReference type="UniPathway" id="UPA00344"/>
<dbReference type="Proteomes" id="UP000000745">
    <property type="component" value="Chromosome"/>
</dbReference>
<dbReference type="GO" id="GO:0051539">
    <property type="term" value="F:4 iron, 4 sulfur cluster binding"/>
    <property type="evidence" value="ECO:0007669"/>
    <property type="project" value="UniProtKB-UniRule"/>
</dbReference>
<dbReference type="GO" id="GO:0061799">
    <property type="term" value="F:cyclic pyranopterin monophosphate synthase activity"/>
    <property type="evidence" value="ECO:0007669"/>
    <property type="project" value="TreeGrafter"/>
</dbReference>
<dbReference type="GO" id="GO:0061798">
    <property type="term" value="F:GTP 3',8'-cyclase activity"/>
    <property type="evidence" value="ECO:0007669"/>
    <property type="project" value="UniProtKB-UniRule"/>
</dbReference>
<dbReference type="GO" id="GO:0005525">
    <property type="term" value="F:GTP binding"/>
    <property type="evidence" value="ECO:0007669"/>
    <property type="project" value="UniProtKB-UniRule"/>
</dbReference>
<dbReference type="GO" id="GO:0046872">
    <property type="term" value="F:metal ion binding"/>
    <property type="evidence" value="ECO:0007669"/>
    <property type="project" value="UniProtKB-KW"/>
</dbReference>
<dbReference type="GO" id="GO:1904047">
    <property type="term" value="F:S-adenosyl-L-methionine binding"/>
    <property type="evidence" value="ECO:0007669"/>
    <property type="project" value="UniProtKB-UniRule"/>
</dbReference>
<dbReference type="GO" id="GO:0006777">
    <property type="term" value="P:Mo-molybdopterin cofactor biosynthetic process"/>
    <property type="evidence" value="ECO:0007669"/>
    <property type="project" value="UniProtKB-UniRule"/>
</dbReference>
<dbReference type="CDD" id="cd01335">
    <property type="entry name" value="Radical_SAM"/>
    <property type="match status" value="1"/>
</dbReference>
<dbReference type="CDD" id="cd21117">
    <property type="entry name" value="Twitch_MoaA"/>
    <property type="match status" value="1"/>
</dbReference>
<dbReference type="FunFam" id="3.20.20.70:FF:000057">
    <property type="entry name" value="GTP 3',8-cyclase"/>
    <property type="match status" value="1"/>
</dbReference>
<dbReference type="Gene3D" id="3.20.20.70">
    <property type="entry name" value="Aldolase class I"/>
    <property type="match status" value="1"/>
</dbReference>
<dbReference type="HAMAP" id="MF_01225_B">
    <property type="entry name" value="MoaA_B"/>
    <property type="match status" value="1"/>
</dbReference>
<dbReference type="InterPro" id="IPR013785">
    <property type="entry name" value="Aldolase_TIM"/>
</dbReference>
<dbReference type="InterPro" id="IPR006638">
    <property type="entry name" value="Elp3/MiaA/NifB-like_rSAM"/>
</dbReference>
<dbReference type="InterPro" id="IPR013483">
    <property type="entry name" value="MoaA"/>
</dbReference>
<dbReference type="InterPro" id="IPR000385">
    <property type="entry name" value="MoaA_NifB_PqqE_Fe-S-bd_CS"/>
</dbReference>
<dbReference type="InterPro" id="IPR010505">
    <property type="entry name" value="MoaA_twitch"/>
</dbReference>
<dbReference type="InterPro" id="IPR050105">
    <property type="entry name" value="MoCo_biosynth_MoaA/MoaC"/>
</dbReference>
<dbReference type="InterPro" id="IPR007197">
    <property type="entry name" value="rSAM"/>
</dbReference>
<dbReference type="NCBIfam" id="TIGR02666">
    <property type="entry name" value="moaA"/>
    <property type="match status" value="1"/>
</dbReference>
<dbReference type="PANTHER" id="PTHR22960:SF28">
    <property type="entry name" value="GTP 3',8-CYCLASE"/>
    <property type="match status" value="1"/>
</dbReference>
<dbReference type="PANTHER" id="PTHR22960">
    <property type="entry name" value="MOLYBDOPTERIN COFACTOR SYNTHESIS PROTEIN A"/>
    <property type="match status" value="1"/>
</dbReference>
<dbReference type="Pfam" id="PF13353">
    <property type="entry name" value="Fer4_12"/>
    <property type="match status" value="1"/>
</dbReference>
<dbReference type="Pfam" id="PF06463">
    <property type="entry name" value="Mob_synth_C"/>
    <property type="match status" value="1"/>
</dbReference>
<dbReference type="Pfam" id="PF04055">
    <property type="entry name" value="Radical_SAM"/>
    <property type="match status" value="1"/>
</dbReference>
<dbReference type="SFLD" id="SFLDG01383">
    <property type="entry name" value="cyclic_pyranopterin_phosphate"/>
    <property type="match status" value="1"/>
</dbReference>
<dbReference type="SFLD" id="SFLDS00029">
    <property type="entry name" value="Radical_SAM"/>
    <property type="match status" value="1"/>
</dbReference>
<dbReference type="SMART" id="SM00729">
    <property type="entry name" value="Elp3"/>
    <property type="match status" value="1"/>
</dbReference>
<dbReference type="SUPFAM" id="SSF102114">
    <property type="entry name" value="Radical SAM enzymes"/>
    <property type="match status" value="1"/>
</dbReference>
<dbReference type="PROSITE" id="PS01305">
    <property type="entry name" value="MOAA_NIFB_PQQE"/>
    <property type="match status" value="1"/>
</dbReference>
<dbReference type="PROSITE" id="PS51918">
    <property type="entry name" value="RADICAL_SAM"/>
    <property type="match status" value="1"/>
</dbReference>
<name>MOAA_ESCF3</name>
<reference key="1">
    <citation type="journal article" date="2009" name="PLoS Genet.">
        <title>Organised genome dynamics in the Escherichia coli species results in highly diverse adaptive paths.</title>
        <authorList>
            <person name="Touchon M."/>
            <person name="Hoede C."/>
            <person name="Tenaillon O."/>
            <person name="Barbe V."/>
            <person name="Baeriswyl S."/>
            <person name="Bidet P."/>
            <person name="Bingen E."/>
            <person name="Bonacorsi S."/>
            <person name="Bouchier C."/>
            <person name="Bouvet O."/>
            <person name="Calteau A."/>
            <person name="Chiapello H."/>
            <person name="Clermont O."/>
            <person name="Cruveiller S."/>
            <person name="Danchin A."/>
            <person name="Diard M."/>
            <person name="Dossat C."/>
            <person name="Karoui M.E."/>
            <person name="Frapy E."/>
            <person name="Garry L."/>
            <person name="Ghigo J.M."/>
            <person name="Gilles A.M."/>
            <person name="Johnson J."/>
            <person name="Le Bouguenec C."/>
            <person name="Lescat M."/>
            <person name="Mangenot S."/>
            <person name="Martinez-Jehanne V."/>
            <person name="Matic I."/>
            <person name="Nassif X."/>
            <person name="Oztas S."/>
            <person name="Petit M.A."/>
            <person name="Pichon C."/>
            <person name="Rouy Z."/>
            <person name="Ruf C.S."/>
            <person name="Schneider D."/>
            <person name="Tourret J."/>
            <person name="Vacherie B."/>
            <person name="Vallenet D."/>
            <person name="Medigue C."/>
            <person name="Rocha E.P.C."/>
            <person name="Denamur E."/>
        </authorList>
    </citation>
    <scope>NUCLEOTIDE SEQUENCE [LARGE SCALE GENOMIC DNA]</scope>
    <source>
        <strain>ATCC 35469 / DSM 13698 / BCRC 15582 / CCUG 18766 / IAM 14443 / JCM 21226 / LMG 7866 / NBRC 102419 / NCTC 12128 / CDC 0568-73</strain>
    </source>
</reference>
<accession>B7LJY1</accession>
<sequence>MASQLTDAFARKFYYLRLSITDVCNFRCTYCLPDGYKPSGVTNKGFLTVDEIRRVTRAFASLGTEKVRLTGGEPSLRRDFTDIIAAVRENDAIRQIAVTTNGYRLERDVANWRDAGLTGINVSVDSLDARQFQAITGQDKFNQVMAGIDAAFEAGFEKVKVNTVLMRDVNHHQLDTFLNWIQHRPIQLRFIELMETGEGSELFRKHHISGQVLRDELLRRGWIHQLRQRSDGPAQVFCHPDYAGEIGLIMPYEKDFCATCNRLRVSSIGKLHLCLFGEGGVNLRDLLEDDTQQQALEARISAALREKKQTHFLHQNNTGITQNLSYIGG</sequence>
<proteinExistence type="inferred from homology"/>
<gene>
    <name evidence="1" type="primary">moaA</name>
    <name type="ordered locus">EFER_2330</name>
</gene>